<gene>
    <name type="primary">HST3</name>
    <name type="ordered locus">CAALFM_C501340WA</name>
    <name type="ORF">CaO19.1934</name>
    <name type="ORF">CaO19.9490</name>
</gene>
<accession>Q5A1W9</accession>
<accession>A0A1D8PN58</accession>
<accession>Q5A1R1</accession>
<reference key="1">
    <citation type="journal article" date="2004" name="Proc. Natl. Acad. Sci. U.S.A.">
        <title>The diploid genome sequence of Candida albicans.</title>
        <authorList>
            <person name="Jones T."/>
            <person name="Federspiel N.A."/>
            <person name="Chibana H."/>
            <person name="Dungan J."/>
            <person name="Kalman S."/>
            <person name="Magee B.B."/>
            <person name="Newport G."/>
            <person name="Thorstenson Y.R."/>
            <person name="Agabian N."/>
            <person name="Magee P.T."/>
            <person name="Davis R.W."/>
            <person name="Scherer S."/>
        </authorList>
    </citation>
    <scope>NUCLEOTIDE SEQUENCE [LARGE SCALE GENOMIC DNA]</scope>
    <source>
        <strain>SC5314 / ATCC MYA-2876</strain>
    </source>
</reference>
<reference key="2">
    <citation type="journal article" date="2007" name="Genome Biol.">
        <title>Assembly of the Candida albicans genome into sixteen supercontigs aligned on the eight chromosomes.</title>
        <authorList>
            <person name="van het Hoog M."/>
            <person name="Rast T.J."/>
            <person name="Martchenko M."/>
            <person name="Grindle S."/>
            <person name="Dignard D."/>
            <person name="Hogues H."/>
            <person name="Cuomo C."/>
            <person name="Berriman M."/>
            <person name="Scherer S."/>
            <person name="Magee B.B."/>
            <person name="Whiteway M."/>
            <person name="Chibana H."/>
            <person name="Nantel A."/>
            <person name="Magee P.T."/>
        </authorList>
    </citation>
    <scope>GENOME REANNOTATION</scope>
    <source>
        <strain>SC5314 / ATCC MYA-2876</strain>
    </source>
</reference>
<reference key="3">
    <citation type="journal article" date="2013" name="Genome Biol.">
        <title>Assembly of a phased diploid Candida albicans genome facilitates allele-specific measurements and provides a simple model for repeat and indel structure.</title>
        <authorList>
            <person name="Muzzey D."/>
            <person name="Schwartz K."/>
            <person name="Weissman J.S."/>
            <person name="Sherlock G."/>
        </authorList>
    </citation>
    <scope>NUCLEOTIDE SEQUENCE [LARGE SCALE GENOMIC DNA]</scope>
    <scope>GENOME REANNOTATION</scope>
    <source>
        <strain>SC5314 / ATCC MYA-2876</strain>
    </source>
</reference>
<name>HST3_CANAL</name>
<keyword id="KW-0963">Cytoplasm</keyword>
<keyword id="KW-0479">Metal-binding</keyword>
<keyword id="KW-0520">NAD</keyword>
<keyword id="KW-0539">Nucleus</keyword>
<keyword id="KW-1185">Reference proteome</keyword>
<keyword id="KW-0678">Repressor</keyword>
<keyword id="KW-0804">Transcription</keyword>
<keyword id="KW-0805">Transcription regulation</keyword>
<keyword id="KW-0808">Transferase</keyword>
<keyword id="KW-0862">Zinc</keyword>
<feature type="chain" id="PRO_0000417413" description="NAD-dependent histone deacetylase HST3">
    <location>
        <begin position="1"/>
        <end position="487"/>
    </location>
</feature>
<feature type="domain" description="Deacetylase sirtuin-type" evidence="2">
    <location>
        <begin position="15"/>
        <end position="336"/>
    </location>
</feature>
<feature type="region of interest" description="Disordered" evidence="3">
    <location>
        <begin position="397"/>
        <end position="487"/>
    </location>
</feature>
<feature type="compositionally biased region" description="Basic and acidic residues" evidence="3">
    <location>
        <begin position="397"/>
        <end position="406"/>
    </location>
</feature>
<feature type="compositionally biased region" description="Basic residues" evidence="3">
    <location>
        <begin position="415"/>
        <end position="425"/>
    </location>
</feature>
<feature type="compositionally biased region" description="Polar residues" evidence="3">
    <location>
        <begin position="448"/>
        <end position="459"/>
    </location>
</feature>
<feature type="active site" description="Proton acceptor" evidence="2">
    <location>
        <position position="167"/>
    </location>
</feature>
<feature type="binding site" evidence="1">
    <location>
        <begin position="40"/>
        <end position="59"/>
    </location>
    <ligand>
        <name>NAD(+)</name>
        <dbReference type="ChEBI" id="CHEBI:57540"/>
    </ligand>
</feature>
<feature type="binding site" evidence="1">
    <location>
        <begin position="129"/>
        <end position="132"/>
    </location>
    <ligand>
        <name>NAD(+)</name>
        <dbReference type="ChEBI" id="CHEBI:57540"/>
    </ligand>
</feature>
<feature type="binding site" evidence="2">
    <location>
        <position position="175"/>
    </location>
    <ligand>
        <name>Zn(2+)</name>
        <dbReference type="ChEBI" id="CHEBI:29105"/>
    </ligand>
</feature>
<feature type="binding site" evidence="2">
    <location>
        <position position="178"/>
    </location>
    <ligand>
        <name>Zn(2+)</name>
        <dbReference type="ChEBI" id="CHEBI:29105"/>
    </ligand>
</feature>
<feature type="binding site" evidence="2">
    <location>
        <position position="200"/>
    </location>
    <ligand>
        <name>Zn(2+)</name>
        <dbReference type="ChEBI" id="CHEBI:29105"/>
    </ligand>
</feature>
<feature type="binding site" evidence="2">
    <location>
        <position position="203"/>
    </location>
    <ligand>
        <name>Zn(2+)</name>
        <dbReference type="ChEBI" id="CHEBI:29105"/>
    </ligand>
</feature>
<feature type="binding site" evidence="1">
    <location>
        <begin position="261"/>
        <end position="263"/>
    </location>
    <ligand>
        <name>NAD(+)</name>
        <dbReference type="ChEBI" id="CHEBI:57540"/>
    </ligand>
</feature>
<feature type="binding site" evidence="1">
    <location>
        <begin position="291"/>
        <end position="293"/>
    </location>
    <ligand>
        <name>NAD(+)</name>
        <dbReference type="ChEBI" id="CHEBI:57540"/>
    </ligand>
</feature>
<feature type="binding site" evidence="1">
    <location>
        <position position="312"/>
    </location>
    <ligand>
        <name>NAD(+)</name>
        <dbReference type="ChEBI" id="CHEBI:57540"/>
    </ligand>
</feature>
<dbReference type="EC" id="2.3.1.286" evidence="2"/>
<dbReference type="EMBL" id="CP017627">
    <property type="protein sequence ID" value="AOW29568.1"/>
    <property type="molecule type" value="Genomic_DNA"/>
</dbReference>
<dbReference type="RefSeq" id="XP_715697.2">
    <property type="nucleotide sequence ID" value="XM_710604.2"/>
</dbReference>
<dbReference type="SMR" id="Q5A1W9"/>
<dbReference type="FunCoup" id="Q5A1W9">
    <property type="interactions" value="79"/>
</dbReference>
<dbReference type="STRING" id="237561.Q5A1W9"/>
<dbReference type="EnsemblFungi" id="C5_01340W_A-T">
    <property type="protein sequence ID" value="C5_01340W_A-T-p1"/>
    <property type="gene ID" value="C5_01340W_A"/>
</dbReference>
<dbReference type="GeneID" id="3642641"/>
<dbReference type="KEGG" id="cal:CAALFM_C501340WA"/>
<dbReference type="CGD" id="CAL0000186930">
    <property type="gene designation" value="HST3"/>
</dbReference>
<dbReference type="VEuPathDB" id="FungiDB:C5_01340W_A"/>
<dbReference type="eggNOG" id="KOG2684">
    <property type="taxonomic scope" value="Eukaryota"/>
</dbReference>
<dbReference type="HOGENOM" id="CLU_021544_4_0_1"/>
<dbReference type="InParanoid" id="Q5A1W9"/>
<dbReference type="OrthoDB" id="2919105at2759"/>
<dbReference type="PRO" id="PR:Q5A1W9"/>
<dbReference type="Proteomes" id="UP000000559">
    <property type="component" value="Chromosome 5"/>
</dbReference>
<dbReference type="GO" id="GO:0005737">
    <property type="term" value="C:cytoplasm"/>
    <property type="evidence" value="ECO:0007669"/>
    <property type="project" value="UniProtKB-SubCell"/>
</dbReference>
<dbReference type="GO" id="GO:0005634">
    <property type="term" value="C:nucleus"/>
    <property type="evidence" value="ECO:0000318"/>
    <property type="project" value="GO_Central"/>
</dbReference>
<dbReference type="GO" id="GO:0004407">
    <property type="term" value="F:histone deacetylase activity"/>
    <property type="evidence" value="ECO:0000315"/>
    <property type="project" value="CGD"/>
</dbReference>
<dbReference type="GO" id="GO:0017136">
    <property type="term" value="F:histone deacetylase activity, NAD-dependent"/>
    <property type="evidence" value="ECO:0000318"/>
    <property type="project" value="GO_Central"/>
</dbReference>
<dbReference type="GO" id="GO:0046872">
    <property type="term" value="F:metal ion binding"/>
    <property type="evidence" value="ECO:0007669"/>
    <property type="project" value="UniProtKB-KW"/>
</dbReference>
<dbReference type="GO" id="GO:0070403">
    <property type="term" value="F:NAD+ binding"/>
    <property type="evidence" value="ECO:0000318"/>
    <property type="project" value="GO_Central"/>
</dbReference>
<dbReference type="GO" id="GO:0030447">
    <property type="term" value="P:filamentous growth"/>
    <property type="evidence" value="ECO:0000315"/>
    <property type="project" value="CGD"/>
</dbReference>
<dbReference type="GO" id="GO:0044182">
    <property type="term" value="P:filamentous growth of a population of unicellular organisms"/>
    <property type="evidence" value="ECO:0000315"/>
    <property type="project" value="CGD"/>
</dbReference>
<dbReference type="GO" id="GO:1900429">
    <property type="term" value="P:negative regulation of filamentous growth of a population of unicellular organisms"/>
    <property type="evidence" value="ECO:0000315"/>
    <property type="project" value="CGD"/>
</dbReference>
<dbReference type="GO" id="GO:0036166">
    <property type="term" value="P:phenotypic switching"/>
    <property type="evidence" value="ECO:0000315"/>
    <property type="project" value="CGD"/>
</dbReference>
<dbReference type="GO" id="GO:0000183">
    <property type="term" value="P:rDNA heterochromatin formation"/>
    <property type="evidence" value="ECO:0000318"/>
    <property type="project" value="GO_Central"/>
</dbReference>
<dbReference type="GO" id="GO:1900239">
    <property type="term" value="P:regulation of phenotypic switching"/>
    <property type="evidence" value="ECO:0000315"/>
    <property type="project" value="CGD"/>
</dbReference>
<dbReference type="Gene3D" id="3.30.1600.10">
    <property type="entry name" value="SIR2/SIRT2 'Small Domain"/>
    <property type="match status" value="1"/>
</dbReference>
<dbReference type="Gene3D" id="3.40.50.1220">
    <property type="entry name" value="TPP-binding domain"/>
    <property type="match status" value="1"/>
</dbReference>
<dbReference type="InterPro" id="IPR029035">
    <property type="entry name" value="DHS-like_NAD/FAD-binding_dom"/>
</dbReference>
<dbReference type="InterPro" id="IPR050134">
    <property type="entry name" value="NAD-dep_sirtuin_deacylases"/>
</dbReference>
<dbReference type="InterPro" id="IPR003000">
    <property type="entry name" value="Sirtuin"/>
</dbReference>
<dbReference type="InterPro" id="IPR026591">
    <property type="entry name" value="Sirtuin_cat_small_dom_sf"/>
</dbReference>
<dbReference type="InterPro" id="IPR026590">
    <property type="entry name" value="Ssirtuin_cat_dom"/>
</dbReference>
<dbReference type="PANTHER" id="PTHR11085:SF8">
    <property type="entry name" value="NAD-DEPENDENT HISTONE DEACETYLASE HST3"/>
    <property type="match status" value="1"/>
</dbReference>
<dbReference type="PANTHER" id="PTHR11085">
    <property type="entry name" value="NAD-DEPENDENT PROTEIN DEACYLASE SIRTUIN-5, MITOCHONDRIAL-RELATED"/>
    <property type="match status" value="1"/>
</dbReference>
<dbReference type="Pfam" id="PF02146">
    <property type="entry name" value="SIR2"/>
    <property type="match status" value="1"/>
</dbReference>
<dbReference type="SUPFAM" id="SSF52467">
    <property type="entry name" value="DHS-like NAD/FAD-binding domain"/>
    <property type="match status" value="1"/>
</dbReference>
<dbReference type="PROSITE" id="PS50305">
    <property type="entry name" value="SIRTUIN"/>
    <property type="match status" value="1"/>
</dbReference>
<organism>
    <name type="scientific">Candida albicans (strain SC5314 / ATCC MYA-2876)</name>
    <name type="common">Yeast</name>
    <dbReference type="NCBI Taxonomy" id="237561"/>
    <lineage>
        <taxon>Eukaryota</taxon>
        <taxon>Fungi</taxon>
        <taxon>Dikarya</taxon>
        <taxon>Ascomycota</taxon>
        <taxon>Saccharomycotina</taxon>
        <taxon>Pichiomycetes</taxon>
        <taxon>Debaryomycetaceae</taxon>
        <taxon>Candida/Lodderomyces clade</taxon>
        <taxon>Candida</taxon>
    </lineage>
</organism>
<comment type="function">
    <text evidence="1">NAD-dependent histone deacetylase, which could function in telomeric silencing, cell cycle progression and chromosome stability.</text>
</comment>
<comment type="catalytic activity">
    <reaction evidence="2">
        <text>N(6)-acetyl-L-lysyl-[protein] + NAD(+) + H2O = 2''-O-acetyl-ADP-D-ribose + nicotinamide + L-lysyl-[protein]</text>
        <dbReference type="Rhea" id="RHEA:43636"/>
        <dbReference type="Rhea" id="RHEA-COMP:9752"/>
        <dbReference type="Rhea" id="RHEA-COMP:10731"/>
        <dbReference type="ChEBI" id="CHEBI:15377"/>
        <dbReference type="ChEBI" id="CHEBI:17154"/>
        <dbReference type="ChEBI" id="CHEBI:29969"/>
        <dbReference type="ChEBI" id="CHEBI:57540"/>
        <dbReference type="ChEBI" id="CHEBI:61930"/>
        <dbReference type="ChEBI" id="CHEBI:83767"/>
        <dbReference type="EC" id="2.3.1.286"/>
    </reaction>
</comment>
<comment type="cofactor">
    <cofactor evidence="1">
        <name>Zn(2+)</name>
        <dbReference type="ChEBI" id="CHEBI:29105"/>
    </cofactor>
    <text evidence="1">Binds 1 zinc ion per subunit.</text>
</comment>
<comment type="subcellular location">
    <subcellularLocation>
        <location evidence="1">Cytoplasm</location>
    </subcellularLocation>
    <subcellularLocation>
        <location evidence="1">Nucleus</location>
    </subcellularLocation>
</comment>
<comment type="similarity">
    <text evidence="4">Belongs to the sirtuin family. Class I subfamily.</text>
</comment>
<sequence length="487" mass="55080">MISIDLLDNSGTSMPADTSIKLHEVIKFISKSKKMTVLTGAGISCNAGIPDFRSSDGLYNMVKAKHPKAVVRGQDLFDISLFRDEMSLSVFCTFMESLYKSSLNAKPTETHKFIKILKDKNKLLRCYTQNIDCIEQHINLKLGINLQEFDNNKFKQVWNQLDVVQLHGNLHKLSCTNCFSQFNWNEEFQTLLANGLNPECSKCMDKYQQRLYSGKRLTGQTIGLLRPDIVLYGEHHPQMEILTQGLNSDLKSRPDCLIIMGTSLKVAGVKSLVKSLSKIIHNKGGKVIYVNKTKLSASSWKNYIDYEVVSDCDEFVRMLKTEIPDLFLTQEQLDSEKLNQVAVKGSSLNKPIVKPEAKVKIEPGIKQEDAIQYSPEREVTIKQEVNIKQEPIVKREVESVSVKEEPIPTPPTTPHKPKQATKLKRKSPDEISANEVHSRVKRLRPRNDQLSSPASSINGSEEEEEEDEPVAKVLFENARKGITLDQH</sequence>
<proteinExistence type="inferred from homology"/>
<protein>
    <recommendedName>
        <fullName>NAD-dependent histone deacetylase HST3</fullName>
        <ecNumber evidence="2">2.3.1.286</ecNumber>
    </recommendedName>
    <alternativeName>
        <fullName>Homologous to SIR2 protein 3</fullName>
    </alternativeName>
    <alternativeName>
        <fullName>Regulatory protein SIR2 homolog 3</fullName>
    </alternativeName>
</protein>
<evidence type="ECO:0000250" key="1"/>
<evidence type="ECO:0000255" key="2">
    <source>
        <dbReference type="PROSITE-ProRule" id="PRU00236"/>
    </source>
</evidence>
<evidence type="ECO:0000256" key="3">
    <source>
        <dbReference type="SAM" id="MobiDB-lite"/>
    </source>
</evidence>
<evidence type="ECO:0000305" key="4"/>